<feature type="chain" id="PRO_0000123220" description="Small ribosomal subunit protein uS11">
    <location>
        <begin position="1"/>
        <end position="129"/>
    </location>
</feature>
<comment type="function">
    <text evidence="1">Located on the platform of the 30S subunit, it bridges several disparate RNA helices of the 16S rRNA. Forms part of the Shine-Dalgarno cleft in the 70S ribosome.</text>
</comment>
<comment type="subunit">
    <text evidence="1">Part of the 30S ribosomal subunit. Interacts with proteins S7 and S18. Binds to IF-3.</text>
</comment>
<comment type="similarity">
    <text evidence="1">Belongs to the universal ribosomal protein uS11 family.</text>
</comment>
<sequence>MARKQVSRKRRVKKNIENGVAHIRSTFNNTIVTITDEFGNALSWSSAGALGFKGSKKSTPFAAQMASETASKSAMEHGLKTVEVTVKGPGPGRESAIRALQSAGLEVTAIRDVTPVPHNGCRPPKRRRV</sequence>
<evidence type="ECO:0000255" key="1">
    <source>
        <dbReference type="HAMAP-Rule" id="MF_01310"/>
    </source>
</evidence>
<evidence type="ECO:0000305" key="2"/>
<gene>
    <name evidence="1" type="primary">rpsK</name>
    <name type="ordered locus">SA2024</name>
</gene>
<name>RS11_STAAN</name>
<dbReference type="EMBL" id="BA000018">
    <property type="protein sequence ID" value="BAB43317.1"/>
    <property type="molecule type" value="Genomic_DNA"/>
</dbReference>
<dbReference type="PIR" id="D90019">
    <property type="entry name" value="D90019"/>
</dbReference>
<dbReference type="RefSeq" id="WP_000101625.1">
    <property type="nucleotide sequence ID" value="NC_002745.2"/>
</dbReference>
<dbReference type="SMR" id="P66357"/>
<dbReference type="EnsemblBacteria" id="BAB43317">
    <property type="protein sequence ID" value="BAB43317"/>
    <property type="gene ID" value="BAB43317"/>
</dbReference>
<dbReference type="GeneID" id="98346537"/>
<dbReference type="KEGG" id="sau:SA2024"/>
<dbReference type="HOGENOM" id="CLU_072439_5_0_9"/>
<dbReference type="GO" id="GO:1990904">
    <property type="term" value="C:ribonucleoprotein complex"/>
    <property type="evidence" value="ECO:0007669"/>
    <property type="project" value="UniProtKB-KW"/>
</dbReference>
<dbReference type="GO" id="GO:0005840">
    <property type="term" value="C:ribosome"/>
    <property type="evidence" value="ECO:0007669"/>
    <property type="project" value="UniProtKB-KW"/>
</dbReference>
<dbReference type="GO" id="GO:0019843">
    <property type="term" value="F:rRNA binding"/>
    <property type="evidence" value="ECO:0007669"/>
    <property type="project" value="UniProtKB-UniRule"/>
</dbReference>
<dbReference type="GO" id="GO:0003735">
    <property type="term" value="F:structural constituent of ribosome"/>
    <property type="evidence" value="ECO:0007669"/>
    <property type="project" value="InterPro"/>
</dbReference>
<dbReference type="GO" id="GO:0006412">
    <property type="term" value="P:translation"/>
    <property type="evidence" value="ECO:0007669"/>
    <property type="project" value="UniProtKB-UniRule"/>
</dbReference>
<dbReference type="FunFam" id="3.30.420.80:FF:000001">
    <property type="entry name" value="30S ribosomal protein S11"/>
    <property type="match status" value="1"/>
</dbReference>
<dbReference type="Gene3D" id="3.30.420.80">
    <property type="entry name" value="Ribosomal protein S11"/>
    <property type="match status" value="1"/>
</dbReference>
<dbReference type="HAMAP" id="MF_01310">
    <property type="entry name" value="Ribosomal_uS11"/>
    <property type="match status" value="1"/>
</dbReference>
<dbReference type="InterPro" id="IPR001971">
    <property type="entry name" value="Ribosomal_uS11"/>
</dbReference>
<dbReference type="InterPro" id="IPR019981">
    <property type="entry name" value="Ribosomal_uS11_bac-type"/>
</dbReference>
<dbReference type="InterPro" id="IPR018102">
    <property type="entry name" value="Ribosomal_uS11_CS"/>
</dbReference>
<dbReference type="InterPro" id="IPR036967">
    <property type="entry name" value="Ribosomal_uS11_sf"/>
</dbReference>
<dbReference type="NCBIfam" id="NF003698">
    <property type="entry name" value="PRK05309.1"/>
    <property type="match status" value="1"/>
</dbReference>
<dbReference type="NCBIfam" id="TIGR03632">
    <property type="entry name" value="uS11_bact"/>
    <property type="match status" value="1"/>
</dbReference>
<dbReference type="PANTHER" id="PTHR11759">
    <property type="entry name" value="40S RIBOSOMAL PROTEIN S14/30S RIBOSOMAL PROTEIN S11"/>
    <property type="match status" value="1"/>
</dbReference>
<dbReference type="Pfam" id="PF00411">
    <property type="entry name" value="Ribosomal_S11"/>
    <property type="match status" value="1"/>
</dbReference>
<dbReference type="PIRSF" id="PIRSF002131">
    <property type="entry name" value="Ribosomal_S11"/>
    <property type="match status" value="1"/>
</dbReference>
<dbReference type="SUPFAM" id="SSF53137">
    <property type="entry name" value="Translational machinery components"/>
    <property type="match status" value="1"/>
</dbReference>
<dbReference type="PROSITE" id="PS00054">
    <property type="entry name" value="RIBOSOMAL_S11"/>
    <property type="match status" value="1"/>
</dbReference>
<protein>
    <recommendedName>
        <fullName evidence="1">Small ribosomal subunit protein uS11</fullName>
    </recommendedName>
    <alternativeName>
        <fullName evidence="2">30S ribosomal protein S11</fullName>
    </alternativeName>
</protein>
<accession>P66357</accession>
<accession>Q99S44</accession>
<keyword id="KW-0687">Ribonucleoprotein</keyword>
<keyword id="KW-0689">Ribosomal protein</keyword>
<keyword id="KW-0694">RNA-binding</keyword>
<keyword id="KW-0699">rRNA-binding</keyword>
<reference key="1">
    <citation type="journal article" date="2001" name="Lancet">
        <title>Whole genome sequencing of meticillin-resistant Staphylococcus aureus.</title>
        <authorList>
            <person name="Kuroda M."/>
            <person name="Ohta T."/>
            <person name="Uchiyama I."/>
            <person name="Baba T."/>
            <person name="Yuzawa H."/>
            <person name="Kobayashi I."/>
            <person name="Cui L."/>
            <person name="Oguchi A."/>
            <person name="Aoki K."/>
            <person name="Nagai Y."/>
            <person name="Lian J.-Q."/>
            <person name="Ito T."/>
            <person name="Kanamori M."/>
            <person name="Matsumaru H."/>
            <person name="Maruyama A."/>
            <person name="Murakami H."/>
            <person name="Hosoyama A."/>
            <person name="Mizutani-Ui Y."/>
            <person name="Takahashi N.K."/>
            <person name="Sawano T."/>
            <person name="Inoue R."/>
            <person name="Kaito C."/>
            <person name="Sekimizu K."/>
            <person name="Hirakawa H."/>
            <person name="Kuhara S."/>
            <person name="Goto S."/>
            <person name="Yabuzaki J."/>
            <person name="Kanehisa M."/>
            <person name="Yamashita A."/>
            <person name="Oshima K."/>
            <person name="Furuya K."/>
            <person name="Yoshino C."/>
            <person name="Shiba T."/>
            <person name="Hattori M."/>
            <person name="Ogasawara N."/>
            <person name="Hayashi H."/>
            <person name="Hiramatsu K."/>
        </authorList>
    </citation>
    <scope>NUCLEOTIDE SEQUENCE [LARGE SCALE GENOMIC DNA]</scope>
    <source>
        <strain>N315</strain>
    </source>
</reference>
<reference key="2">
    <citation type="submission" date="2005-11" db="UniProtKB">
        <title>Shotgun proteomic analysis of total protein extract of S. aureus S30 versus N315.</title>
        <authorList>
            <person name="Stenz L."/>
        </authorList>
    </citation>
    <scope>IDENTIFICATION BY MASS SPECTROMETRY</scope>
</reference>
<reference key="3">
    <citation type="submission" date="2007-10" db="UniProtKB">
        <title>Shotgun proteomic analysis of total and membrane protein extracts of S. aureus strain N315.</title>
        <authorList>
            <person name="Vaezzadeh A.R."/>
            <person name="Deshusses J."/>
            <person name="Lescuyer P."/>
            <person name="Hochstrasser D.F."/>
        </authorList>
    </citation>
    <scope>IDENTIFICATION BY MASS SPECTROMETRY [LARGE SCALE ANALYSIS]</scope>
    <source>
        <strain>N315</strain>
    </source>
</reference>
<organism>
    <name type="scientific">Staphylococcus aureus (strain N315)</name>
    <dbReference type="NCBI Taxonomy" id="158879"/>
    <lineage>
        <taxon>Bacteria</taxon>
        <taxon>Bacillati</taxon>
        <taxon>Bacillota</taxon>
        <taxon>Bacilli</taxon>
        <taxon>Bacillales</taxon>
        <taxon>Staphylococcaceae</taxon>
        <taxon>Staphylococcus</taxon>
    </lineage>
</organism>
<proteinExistence type="evidence at protein level"/>